<reference key="1">
    <citation type="journal article" date="2002" name="Lancet">
        <title>Genome and virulence determinants of high virulence community-acquired MRSA.</title>
        <authorList>
            <person name="Baba T."/>
            <person name="Takeuchi F."/>
            <person name="Kuroda M."/>
            <person name="Yuzawa H."/>
            <person name="Aoki K."/>
            <person name="Oguchi A."/>
            <person name="Nagai Y."/>
            <person name="Iwama N."/>
            <person name="Asano K."/>
            <person name="Naimi T."/>
            <person name="Kuroda H."/>
            <person name="Cui L."/>
            <person name="Yamamoto K."/>
            <person name="Hiramatsu K."/>
        </authorList>
    </citation>
    <scope>NUCLEOTIDE SEQUENCE [LARGE SCALE GENOMIC DNA]</scope>
    <source>
        <strain>MW2</strain>
    </source>
</reference>
<comment type="function">
    <text evidence="1">Catalyzes the attachment of glutamate to tRNA(Glu) in a two-step reaction: glutamate is first activated by ATP to form Glu-AMP and then transferred to the acceptor end of tRNA(Glu).</text>
</comment>
<comment type="catalytic activity">
    <reaction evidence="1">
        <text>tRNA(Glu) + L-glutamate + ATP = L-glutamyl-tRNA(Glu) + AMP + diphosphate</text>
        <dbReference type="Rhea" id="RHEA:23540"/>
        <dbReference type="Rhea" id="RHEA-COMP:9663"/>
        <dbReference type="Rhea" id="RHEA-COMP:9680"/>
        <dbReference type="ChEBI" id="CHEBI:29985"/>
        <dbReference type="ChEBI" id="CHEBI:30616"/>
        <dbReference type="ChEBI" id="CHEBI:33019"/>
        <dbReference type="ChEBI" id="CHEBI:78442"/>
        <dbReference type="ChEBI" id="CHEBI:78520"/>
        <dbReference type="ChEBI" id="CHEBI:456215"/>
        <dbReference type="EC" id="6.1.1.17"/>
    </reaction>
</comment>
<comment type="subunit">
    <text evidence="1">Monomer.</text>
</comment>
<comment type="subcellular location">
    <subcellularLocation>
        <location evidence="1">Cytoplasm</location>
    </subcellularLocation>
</comment>
<comment type="similarity">
    <text evidence="1">Belongs to the class-I aminoacyl-tRNA synthetase family. Glutamate--tRNA ligase type 1 subfamily.</text>
</comment>
<sequence>MSDRIRVRYAPSPTGYLHIGNARTALFNYLYAKHYNGDFVIRIEDTDKKRNLEDGETSQFDNLKWLGLDWDESVDKDNGYGPYRQSERQHIYQPLIDQLLAEDKAYKCYMTEEELEAEREAQIARGEMPRYGGQHAHLTEEQRQQFEAEGRQPSIRFRVPQNQTYSFDDMVKGNISFDSNGIGDWVIVKKDGIPTYNFAVAIDDHYMQISDVIRGDDHISNTPKQIMIYEAFGWEPPRFGHMSLIVNEERKKLSKRDGQILQFIEQYRDLGYLPEALFNFIALLGWSPEGEEEIFSKEEFIKIFDEKRLSKSPAFFDKQKLAWVNNQYMKQKDTETVFQLALPHLIKANLIPEVPSEEDLSWGRKLIALYQKEMSYAGEIVPLSEMFFKEMPALGEEEQQVINGEQVPELMTHLFSKLEALEPFEAAEIKKTIKEVQKETGIKGKQLFMPIRVAVTGQMHGPELPNTIEVLGKEKVLNRLKQYK</sequence>
<gene>
    <name evidence="1" type="primary">gltX</name>
    <name type="ordered locus">MW0483</name>
</gene>
<accession>P67022</accession>
<accession>Q99W75</accession>
<protein>
    <recommendedName>
        <fullName evidence="1">Glutamate--tRNA ligase</fullName>
        <ecNumber evidence="1">6.1.1.17</ecNumber>
    </recommendedName>
    <alternativeName>
        <fullName evidence="1">Glutamyl-tRNA synthetase</fullName>
        <shortName evidence="1">GluRS</shortName>
    </alternativeName>
</protein>
<feature type="chain" id="PRO_0000119656" description="Glutamate--tRNA ligase">
    <location>
        <begin position="1"/>
        <end position="484"/>
    </location>
</feature>
<feature type="short sequence motif" description="'HIGH' region" evidence="1">
    <location>
        <begin position="11"/>
        <end position="21"/>
    </location>
</feature>
<feature type="short sequence motif" description="'KMSKS' region" evidence="1">
    <location>
        <begin position="252"/>
        <end position="256"/>
    </location>
</feature>
<feature type="binding site" evidence="1">
    <location>
        <position position="255"/>
    </location>
    <ligand>
        <name>ATP</name>
        <dbReference type="ChEBI" id="CHEBI:30616"/>
    </ligand>
</feature>
<organism>
    <name type="scientific">Staphylococcus aureus (strain MW2)</name>
    <dbReference type="NCBI Taxonomy" id="196620"/>
    <lineage>
        <taxon>Bacteria</taxon>
        <taxon>Bacillati</taxon>
        <taxon>Bacillota</taxon>
        <taxon>Bacilli</taxon>
        <taxon>Bacillales</taxon>
        <taxon>Staphylococcaceae</taxon>
        <taxon>Staphylococcus</taxon>
    </lineage>
</organism>
<evidence type="ECO:0000255" key="1">
    <source>
        <dbReference type="HAMAP-Rule" id="MF_00022"/>
    </source>
</evidence>
<name>SYE_STAAW</name>
<keyword id="KW-0030">Aminoacyl-tRNA synthetase</keyword>
<keyword id="KW-0067">ATP-binding</keyword>
<keyword id="KW-0963">Cytoplasm</keyword>
<keyword id="KW-0436">Ligase</keyword>
<keyword id="KW-0547">Nucleotide-binding</keyword>
<keyword id="KW-0648">Protein biosynthesis</keyword>
<dbReference type="EC" id="6.1.1.17" evidence="1"/>
<dbReference type="EMBL" id="BA000033">
    <property type="protein sequence ID" value="BAB94348.1"/>
    <property type="molecule type" value="Genomic_DNA"/>
</dbReference>
<dbReference type="RefSeq" id="WP_001283792.1">
    <property type="nucleotide sequence ID" value="NC_003923.1"/>
</dbReference>
<dbReference type="SMR" id="P67022"/>
<dbReference type="KEGG" id="sam:MW0483"/>
<dbReference type="HOGENOM" id="CLU_015768_6_1_9"/>
<dbReference type="GO" id="GO:0005829">
    <property type="term" value="C:cytosol"/>
    <property type="evidence" value="ECO:0007669"/>
    <property type="project" value="TreeGrafter"/>
</dbReference>
<dbReference type="GO" id="GO:0005524">
    <property type="term" value="F:ATP binding"/>
    <property type="evidence" value="ECO:0007669"/>
    <property type="project" value="UniProtKB-UniRule"/>
</dbReference>
<dbReference type="GO" id="GO:0004818">
    <property type="term" value="F:glutamate-tRNA ligase activity"/>
    <property type="evidence" value="ECO:0007669"/>
    <property type="project" value="UniProtKB-UniRule"/>
</dbReference>
<dbReference type="GO" id="GO:0000049">
    <property type="term" value="F:tRNA binding"/>
    <property type="evidence" value="ECO:0007669"/>
    <property type="project" value="InterPro"/>
</dbReference>
<dbReference type="GO" id="GO:0008270">
    <property type="term" value="F:zinc ion binding"/>
    <property type="evidence" value="ECO:0007669"/>
    <property type="project" value="InterPro"/>
</dbReference>
<dbReference type="GO" id="GO:0006424">
    <property type="term" value="P:glutamyl-tRNA aminoacylation"/>
    <property type="evidence" value="ECO:0007669"/>
    <property type="project" value="UniProtKB-UniRule"/>
</dbReference>
<dbReference type="CDD" id="cd00808">
    <property type="entry name" value="GluRS_core"/>
    <property type="match status" value="1"/>
</dbReference>
<dbReference type="FunFam" id="1.10.10.350:FF:000002">
    <property type="entry name" value="Glutamate--tRNA ligase"/>
    <property type="match status" value="1"/>
</dbReference>
<dbReference type="FunFam" id="3.40.50.620:FF:000007">
    <property type="entry name" value="Glutamate--tRNA ligase"/>
    <property type="match status" value="1"/>
</dbReference>
<dbReference type="Gene3D" id="1.10.10.350">
    <property type="match status" value="1"/>
</dbReference>
<dbReference type="Gene3D" id="3.40.50.620">
    <property type="entry name" value="HUPs"/>
    <property type="match status" value="1"/>
</dbReference>
<dbReference type="HAMAP" id="MF_00022">
    <property type="entry name" value="Glu_tRNA_synth_type1"/>
    <property type="match status" value="1"/>
</dbReference>
<dbReference type="InterPro" id="IPR045462">
    <property type="entry name" value="aa-tRNA-synth_I_cd-bd"/>
</dbReference>
<dbReference type="InterPro" id="IPR020751">
    <property type="entry name" value="aa-tRNA-synth_I_codon-bd_sub2"/>
</dbReference>
<dbReference type="InterPro" id="IPR001412">
    <property type="entry name" value="aa-tRNA-synth_I_CS"/>
</dbReference>
<dbReference type="InterPro" id="IPR008925">
    <property type="entry name" value="aa_tRNA-synth_I_cd-bd_sf"/>
</dbReference>
<dbReference type="InterPro" id="IPR004527">
    <property type="entry name" value="Glu-tRNA-ligase_bac/mito"/>
</dbReference>
<dbReference type="InterPro" id="IPR000924">
    <property type="entry name" value="Glu/Gln-tRNA-synth"/>
</dbReference>
<dbReference type="InterPro" id="IPR020058">
    <property type="entry name" value="Glu/Gln-tRNA-synth_Ib_cat-dom"/>
</dbReference>
<dbReference type="InterPro" id="IPR049940">
    <property type="entry name" value="GluQ/Sye"/>
</dbReference>
<dbReference type="InterPro" id="IPR033910">
    <property type="entry name" value="GluRS_core"/>
</dbReference>
<dbReference type="InterPro" id="IPR014729">
    <property type="entry name" value="Rossmann-like_a/b/a_fold"/>
</dbReference>
<dbReference type="NCBIfam" id="TIGR00464">
    <property type="entry name" value="gltX_bact"/>
    <property type="match status" value="1"/>
</dbReference>
<dbReference type="PANTHER" id="PTHR43311">
    <property type="entry name" value="GLUTAMATE--TRNA LIGASE"/>
    <property type="match status" value="1"/>
</dbReference>
<dbReference type="PANTHER" id="PTHR43311:SF2">
    <property type="entry name" value="GLUTAMATE--TRNA LIGASE, MITOCHONDRIAL-RELATED"/>
    <property type="match status" value="1"/>
</dbReference>
<dbReference type="Pfam" id="PF19269">
    <property type="entry name" value="Anticodon_2"/>
    <property type="match status" value="1"/>
</dbReference>
<dbReference type="Pfam" id="PF00749">
    <property type="entry name" value="tRNA-synt_1c"/>
    <property type="match status" value="1"/>
</dbReference>
<dbReference type="PRINTS" id="PR00987">
    <property type="entry name" value="TRNASYNTHGLU"/>
</dbReference>
<dbReference type="SUPFAM" id="SSF48163">
    <property type="entry name" value="An anticodon-binding domain of class I aminoacyl-tRNA synthetases"/>
    <property type="match status" value="1"/>
</dbReference>
<dbReference type="SUPFAM" id="SSF52374">
    <property type="entry name" value="Nucleotidylyl transferase"/>
    <property type="match status" value="1"/>
</dbReference>
<dbReference type="PROSITE" id="PS00178">
    <property type="entry name" value="AA_TRNA_LIGASE_I"/>
    <property type="match status" value="1"/>
</dbReference>
<proteinExistence type="inferred from homology"/>